<reference key="1">
    <citation type="journal article" date="2004" name="Proc. Natl. Acad. Sci. U.S.A.">
        <title>Complete genomes of two clinical Staphylococcus aureus strains: evidence for the rapid evolution of virulence and drug resistance.</title>
        <authorList>
            <person name="Holden M.T.G."/>
            <person name="Feil E.J."/>
            <person name="Lindsay J.A."/>
            <person name="Peacock S.J."/>
            <person name="Day N.P.J."/>
            <person name="Enright M.C."/>
            <person name="Foster T.J."/>
            <person name="Moore C.E."/>
            <person name="Hurst L."/>
            <person name="Atkin R."/>
            <person name="Barron A."/>
            <person name="Bason N."/>
            <person name="Bentley S.D."/>
            <person name="Chillingworth C."/>
            <person name="Chillingworth T."/>
            <person name="Churcher C."/>
            <person name="Clark L."/>
            <person name="Corton C."/>
            <person name="Cronin A."/>
            <person name="Doggett J."/>
            <person name="Dowd L."/>
            <person name="Feltwell T."/>
            <person name="Hance Z."/>
            <person name="Harris B."/>
            <person name="Hauser H."/>
            <person name="Holroyd S."/>
            <person name="Jagels K."/>
            <person name="James K.D."/>
            <person name="Lennard N."/>
            <person name="Line A."/>
            <person name="Mayes R."/>
            <person name="Moule S."/>
            <person name="Mungall K."/>
            <person name="Ormond D."/>
            <person name="Quail M.A."/>
            <person name="Rabbinowitsch E."/>
            <person name="Rutherford K.M."/>
            <person name="Sanders M."/>
            <person name="Sharp S."/>
            <person name="Simmonds M."/>
            <person name="Stevens K."/>
            <person name="Whitehead S."/>
            <person name="Barrell B.G."/>
            <person name="Spratt B.G."/>
            <person name="Parkhill J."/>
        </authorList>
    </citation>
    <scope>NUCLEOTIDE SEQUENCE [LARGE SCALE GENOMIC DNA]</scope>
    <source>
        <strain>MSSA476</strain>
    </source>
</reference>
<name>GUAA_STAAS</name>
<dbReference type="EC" id="6.3.5.2" evidence="1"/>
<dbReference type="EMBL" id="BX571857">
    <property type="protein sequence ID" value="CAG42139.1"/>
    <property type="molecule type" value="Genomic_DNA"/>
</dbReference>
<dbReference type="RefSeq" id="WP_000424968.1">
    <property type="nucleotide sequence ID" value="NC_002953.3"/>
</dbReference>
<dbReference type="SMR" id="Q6GC81"/>
<dbReference type="MEROPS" id="C26.957"/>
<dbReference type="KEGG" id="sas:SAS0367"/>
<dbReference type="HOGENOM" id="CLU_014340_0_5_9"/>
<dbReference type="UniPathway" id="UPA00189">
    <property type="reaction ID" value="UER00296"/>
</dbReference>
<dbReference type="GO" id="GO:0005829">
    <property type="term" value="C:cytosol"/>
    <property type="evidence" value="ECO:0007669"/>
    <property type="project" value="TreeGrafter"/>
</dbReference>
<dbReference type="GO" id="GO:0005524">
    <property type="term" value="F:ATP binding"/>
    <property type="evidence" value="ECO:0007669"/>
    <property type="project" value="UniProtKB-UniRule"/>
</dbReference>
<dbReference type="GO" id="GO:0003921">
    <property type="term" value="F:GMP synthase activity"/>
    <property type="evidence" value="ECO:0007669"/>
    <property type="project" value="InterPro"/>
</dbReference>
<dbReference type="CDD" id="cd01742">
    <property type="entry name" value="GATase1_GMP_Synthase"/>
    <property type="match status" value="1"/>
</dbReference>
<dbReference type="CDD" id="cd01997">
    <property type="entry name" value="GMP_synthase_C"/>
    <property type="match status" value="1"/>
</dbReference>
<dbReference type="FunFam" id="3.30.300.10:FF:000002">
    <property type="entry name" value="GMP synthase [glutamine-hydrolyzing]"/>
    <property type="match status" value="1"/>
</dbReference>
<dbReference type="FunFam" id="3.40.50.620:FF:000001">
    <property type="entry name" value="GMP synthase [glutamine-hydrolyzing]"/>
    <property type="match status" value="1"/>
</dbReference>
<dbReference type="FunFam" id="3.40.50.880:FF:000001">
    <property type="entry name" value="GMP synthase [glutamine-hydrolyzing]"/>
    <property type="match status" value="1"/>
</dbReference>
<dbReference type="Gene3D" id="3.30.300.10">
    <property type="match status" value="1"/>
</dbReference>
<dbReference type="Gene3D" id="3.40.50.880">
    <property type="match status" value="1"/>
</dbReference>
<dbReference type="Gene3D" id="3.40.50.620">
    <property type="entry name" value="HUPs"/>
    <property type="match status" value="1"/>
</dbReference>
<dbReference type="HAMAP" id="MF_00344">
    <property type="entry name" value="GMP_synthase"/>
    <property type="match status" value="1"/>
</dbReference>
<dbReference type="InterPro" id="IPR029062">
    <property type="entry name" value="Class_I_gatase-like"/>
</dbReference>
<dbReference type="InterPro" id="IPR017926">
    <property type="entry name" value="GATASE"/>
</dbReference>
<dbReference type="InterPro" id="IPR001674">
    <property type="entry name" value="GMP_synth_C"/>
</dbReference>
<dbReference type="InterPro" id="IPR004739">
    <property type="entry name" value="GMP_synth_GATase"/>
</dbReference>
<dbReference type="InterPro" id="IPR022955">
    <property type="entry name" value="GMP_synthase"/>
</dbReference>
<dbReference type="InterPro" id="IPR025777">
    <property type="entry name" value="GMPS_ATP_PPase_dom"/>
</dbReference>
<dbReference type="InterPro" id="IPR014729">
    <property type="entry name" value="Rossmann-like_a/b/a_fold"/>
</dbReference>
<dbReference type="NCBIfam" id="TIGR00884">
    <property type="entry name" value="guaA_Cterm"/>
    <property type="match status" value="1"/>
</dbReference>
<dbReference type="NCBIfam" id="TIGR00888">
    <property type="entry name" value="guaA_Nterm"/>
    <property type="match status" value="1"/>
</dbReference>
<dbReference type="NCBIfam" id="NF000848">
    <property type="entry name" value="PRK00074.1"/>
    <property type="match status" value="1"/>
</dbReference>
<dbReference type="PANTHER" id="PTHR11922:SF2">
    <property type="entry name" value="GMP SYNTHASE [GLUTAMINE-HYDROLYZING]"/>
    <property type="match status" value="1"/>
</dbReference>
<dbReference type="PANTHER" id="PTHR11922">
    <property type="entry name" value="GMP SYNTHASE-RELATED"/>
    <property type="match status" value="1"/>
</dbReference>
<dbReference type="Pfam" id="PF00117">
    <property type="entry name" value="GATase"/>
    <property type="match status" value="1"/>
</dbReference>
<dbReference type="Pfam" id="PF00958">
    <property type="entry name" value="GMP_synt_C"/>
    <property type="match status" value="1"/>
</dbReference>
<dbReference type="Pfam" id="PF03054">
    <property type="entry name" value="tRNA_Me_trans"/>
    <property type="match status" value="1"/>
</dbReference>
<dbReference type="PRINTS" id="PR00097">
    <property type="entry name" value="ANTSNTHASEII"/>
</dbReference>
<dbReference type="PRINTS" id="PR00099">
    <property type="entry name" value="CPSGATASE"/>
</dbReference>
<dbReference type="PRINTS" id="PR00096">
    <property type="entry name" value="GATASE"/>
</dbReference>
<dbReference type="SUPFAM" id="SSF52402">
    <property type="entry name" value="Adenine nucleotide alpha hydrolases-like"/>
    <property type="match status" value="1"/>
</dbReference>
<dbReference type="SUPFAM" id="SSF52317">
    <property type="entry name" value="Class I glutamine amidotransferase-like"/>
    <property type="match status" value="1"/>
</dbReference>
<dbReference type="SUPFAM" id="SSF54810">
    <property type="entry name" value="GMP synthetase C-terminal dimerisation domain"/>
    <property type="match status" value="1"/>
</dbReference>
<dbReference type="PROSITE" id="PS51273">
    <property type="entry name" value="GATASE_TYPE_1"/>
    <property type="match status" value="1"/>
</dbReference>
<dbReference type="PROSITE" id="PS51553">
    <property type="entry name" value="GMPS_ATP_PPASE"/>
    <property type="match status" value="1"/>
</dbReference>
<sequence>MEMAKEQELILVLDFGSQYNQLITRRIREMGVYSELHDHEISIEEIKKMNPKGIILSGGPNSVYEEGSFTIDPEIYNLGIPVLGICYGMQLTTKLLGGKVERANEREYGKAIINAKSDELFAGLPAEQTVWMSHSDKVIEIPEGFEVIADSPSTDYAAIEDKKRRIYGVQFHPEVRHTEYGNDLLNNFVRRVCECKGQWTMENFIEIEIEKIRQRVGDRRVLCAMSGGVDSSVVAVLLHKAIGDQLTCIFVDHGLLRKGEGDMVMEQFGEGFNMNIIRVNAKDRFMNKLKGVSDPEQKRKIIGNEFVYVFDDEASKLKGVDFLAQGTLYTDVIESGTKTAQTIKSHHNVGGLPEDMEFELIEPINTLFKDEVRKLGIELGIPEHLVWRQPFPGPGLGIRVLGEITEDKLEIVRESDAILRQVIREEGLEREIWQYFTVLPNIQSVGVMGDYRTYDHTVGIRAVTSIDGMTSDFARIDWEVLQKISSRIVNEVDHVNRVVYDITSKPPSTIEWE</sequence>
<gene>
    <name evidence="1" type="primary">guaA</name>
    <name type="ordered locus">SAS0367</name>
</gene>
<evidence type="ECO:0000255" key="1">
    <source>
        <dbReference type="HAMAP-Rule" id="MF_00344"/>
    </source>
</evidence>
<comment type="function">
    <text evidence="1">Catalyzes the synthesis of GMP from XMP.</text>
</comment>
<comment type="catalytic activity">
    <reaction evidence="1">
        <text>XMP + L-glutamine + ATP + H2O = GMP + L-glutamate + AMP + diphosphate + 2 H(+)</text>
        <dbReference type="Rhea" id="RHEA:11680"/>
        <dbReference type="ChEBI" id="CHEBI:15377"/>
        <dbReference type="ChEBI" id="CHEBI:15378"/>
        <dbReference type="ChEBI" id="CHEBI:29985"/>
        <dbReference type="ChEBI" id="CHEBI:30616"/>
        <dbReference type="ChEBI" id="CHEBI:33019"/>
        <dbReference type="ChEBI" id="CHEBI:57464"/>
        <dbReference type="ChEBI" id="CHEBI:58115"/>
        <dbReference type="ChEBI" id="CHEBI:58359"/>
        <dbReference type="ChEBI" id="CHEBI:456215"/>
        <dbReference type="EC" id="6.3.5.2"/>
    </reaction>
</comment>
<comment type="pathway">
    <text evidence="1">Purine metabolism; GMP biosynthesis; GMP from XMP (L-Gln route): step 1/1.</text>
</comment>
<comment type="subunit">
    <text evidence="1">Homodimer.</text>
</comment>
<organism>
    <name type="scientific">Staphylococcus aureus (strain MSSA476)</name>
    <dbReference type="NCBI Taxonomy" id="282459"/>
    <lineage>
        <taxon>Bacteria</taxon>
        <taxon>Bacillati</taxon>
        <taxon>Bacillota</taxon>
        <taxon>Bacilli</taxon>
        <taxon>Bacillales</taxon>
        <taxon>Staphylococcaceae</taxon>
        <taxon>Staphylococcus</taxon>
    </lineage>
</organism>
<feature type="chain" id="PRO_0000140179" description="GMP synthase [glutamine-hydrolyzing]">
    <location>
        <begin position="1"/>
        <end position="513"/>
    </location>
</feature>
<feature type="domain" description="Glutamine amidotransferase type-1" evidence="1">
    <location>
        <begin position="9"/>
        <end position="198"/>
    </location>
</feature>
<feature type="domain" description="GMPS ATP-PPase" evidence="1">
    <location>
        <begin position="199"/>
        <end position="388"/>
    </location>
</feature>
<feature type="active site" description="Nucleophile" evidence="1">
    <location>
        <position position="86"/>
    </location>
</feature>
<feature type="active site" evidence="1">
    <location>
        <position position="172"/>
    </location>
</feature>
<feature type="active site" evidence="1">
    <location>
        <position position="174"/>
    </location>
</feature>
<feature type="binding site" evidence="1">
    <location>
        <begin position="226"/>
        <end position="232"/>
    </location>
    <ligand>
        <name>ATP</name>
        <dbReference type="ChEBI" id="CHEBI:30616"/>
    </ligand>
</feature>
<keyword id="KW-0067">ATP-binding</keyword>
<keyword id="KW-0315">Glutamine amidotransferase</keyword>
<keyword id="KW-0332">GMP biosynthesis</keyword>
<keyword id="KW-0436">Ligase</keyword>
<keyword id="KW-0547">Nucleotide-binding</keyword>
<keyword id="KW-0658">Purine biosynthesis</keyword>
<proteinExistence type="inferred from homology"/>
<accession>Q6GC81</accession>
<protein>
    <recommendedName>
        <fullName evidence="1">GMP synthase [glutamine-hydrolyzing]</fullName>
        <ecNumber evidence="1">6.3.5.2</ecNumber>
    </recommendedName>
    <alternativeName>
        <fullName evidence="1">GMP synthetase</fullName>
    </alternativeName>
    <alternativeName>
        <fullName evidence="1">Glutamine amidotransferase</fullName>
    </alternativeName>
</protein>